<protein>
    <recommendedName>
        <fullName>Creatine kinase U-type, mitochondrial</fullName>
        <ecNumber>2.7.3.2</ecNumber>
    </recommendedName>
    <alternativeName>
        <fullName>Acidic-type mitochondrial creatine kinase</fullName>
        <shortName>Mia-CK</shortName>
    </alternativeName>
    <alternativeName>
        <fullName>Ubiquitous mitochondrial creatine kinase</fullName>
        <shortName>U-MtCK</shortName>
    </alternativeName>
</protein>
<organism>
    <name type="scientific">Mus musculus</name>
    <name type="common">Mouse</name>
    <dbReference type="NCBI Taxonomy" id="10090"/>
    <lineage>
        <taxon>Eukaryota</taxon>
        <taxon>Metazoa</taxon>
        <taxon>Chordata</taxon>
        <taxon>Craniata</taxon>
        <taxon>Vertebrata</taxon>
        <taxon>Euteleostomi</taxon>
        <taxon>Mammalia</taxon>
        <taxon>Eutheria</taxon>
        <taxon>Euarchontoglires</taxon>
        <taxon>Glires</taxon>
        <taxon>Rodentia</taxon>
        <taxon>Myomorpha</taxon>
        <taxon>Muroidea</taxon>
        <taxon>Muridae</taxon>
        <taxon>Murinae</taxon>
        <taxon>Mus</taxon>
        <taxon>Mus</taxon>
    </lineage>
</organism>
<dbReference type="EC" id="2.7.3.2"/>
<dbReference type="EMBL" id="Z13968">
    <property type="protein sequence ID" value="CAA78371.1"/>
    <property type="molecule type" value="mRNA"/>
</dbReference>
<dbReference type="EMBL" id="Z13969">
    <property type="protein sequence ID" value="CAA78372.1"/>
    <property type="molecule type" value="Genomic_DNA"/>
</dbReference>
<dbReference type="EMBL" id="BC025976">
    <property type="protein sequence ID" value="AAH25976.1"/>
    <property type="molecule type" value="mRNA"/>
</dbReference>
<dbReference type="CCDS" id="CCDS16640.1"/>
<dbReference type="PIR" id="I48308">
    <property type="entry name" value="S24612"/>
</dbReference>
<dbReference type="RefSeq" id="NP_001341998.1">
    <property type="nucleotide sequence ID" value="NM_001355069.1"/>
</dbReference>
<dbReference type="RefSeq" id="NP_001403881.1">
    <property type="nucleotide sequence ID" value="NM_001416952.1"/>
</dbReference>
<dbReference type="RefSeq" id="NP_034027.1">
    <property type="nucleotide sequence ID" value="NM_009897.4"/>
</dbReference>
<dbReference type="RefSeq" id="XP_006498718.1">
    <property type="nucleotide sequence ID" value="XM_006498655.1"/>
</dbReference>
<dbReference type="RefSeq" id="XP_006498719.1">
    <property type="nucleotide sequence ID" value="XM_006498656.2"/>
</dbReference>
<dbReference type="SMR" id="P30275"/>
<dbReference type="BioGRID" id="198727">
    <property type="interactions" value="10"/>
</dbReference>
<dbReference type="DIP" id="DIP-32284N"/>
<dbReference type="FunCoup" id="P30275">
    <property type="interactions" value="92"/>
</dbReference>
<dbReference type="IntAct" id="P30275">
    <property type="interactions" value="6"/>
</dbReference>
<dbReference type="MINT" id="P30275"/>
<dbReference type="STRING" id="10090.ENSMUSP00000000317"/>
<dbReference type="GlyGen" id="P30275">
    <property type="glycosylation" value="1 site, 1 O-linked glycan (1 site)"/>
</dbReference>
<dbReference type="iPTMnet" id="P30275"/>
<dbReference type="PhosphoSitePlus" id="P30275"/>
<dbReference type="SwissPalm" id="P30275"/>
<dbReference type="jPOST" id="P30275"/>
<dbReference type="PaxDb" id="10090-ENSMUSP00000000317"/>
<dbReference type="PeptideAtlas" id="P30275"/>
<dbReference type="ProteomicsDB" id="269284"/>
<dbReference type="DNASU" id="12716"/>
<dbReference type="Ensembl" id="ENSMUST00000000317.13">
    <property type="protein sequence ID" value="ENSMUSP00000000317.6"/>
    <property type="gene ID" value="ENSMUSG00000000308.15"/>
</dbReference>
<dbReference type="Ensembl" id="ENSMUST00000078222.9">
    <property type="protein sequence ID" value="ENSMUSP00000077349.3"/>
    <property type="gene ID" value="ENSMUSG00000000308.15"/>
</dbReference>
<dbReference type="GeneID" id="12716"/>
<dbReference type="KEGG" id="mmu:12716"/>
<dbReference type="UCSC" id="uc008lyt.1">
    <property type="organism name" value="mouse"/>
</dbReference>
<dbReference type="AGR" id="MGI:99441"/>
<dbReference type="CTD" id="12716"/>
<dbReference type="MGI" id="MGI:99441">
    <property type="gene designation" value="Ckmt1"/>
</dbReference>
<dbReference type="VEuPathDB" id="HostDB:ENSMUSG00000000308"/>
<dbReference type="eggNOG" id="KOG3581">
    <property type="taxonomic scope" value="Eukaryota"/>
</dbReference>
<dbReference type="GeneTree" id="ENSGT00950000182772"/>
<dbReference type="HOGENOM" id="CLU_019868_4_2_1"/>
<dbReference type="InParanoid" id="P30275"/>
<dbReference type="OMA" id="NCMASAM"/>
<dbReference type="OrthoDB" id="430219at2759"/>
<dbReference type="PhylomeDB" id="P30275"/>
<dbReference type="TreeFam" id="TF314214"/>
<dbReference type="BRENDA" id="2.7.3.2">
    <property type="organism ID" value="3474"/>
</dbReference>
<dbReference type="Reactome" id="R-MMU-71288">
    <property type="pathway name" value="Creatine metabolism"/>
</dbReference>
<dbReference type="BioGRID-ORCS" id="12716">
    <property type="hits" value="2 hits in 78 CRISPR screens"/>
</dbReference>
<dbReference type="CD-CODE" id="CE726F99">
    <property type="entry name" value="Postsynaptic density"/>
</dbReference>
<dbReference type="PRO" id="PR:P30275"/>
<dbReference type="Proteomes" id="UP000000589">
    <property type="component" value="Chromosome 2"/>
</dbReference>
<dbReference type="RNAct" id="P30275">
    <property type="molecule type" value="protein"/>
</dbReference>
<dbReference type="Bgee" id="ENSMUSG00000000308">
    <property type="expression patterns" value="Expressed in left colon and 190 other cell types or tissues"/>
</dbReference>
<dbReference type="ExpressionAtlas" id="P30275">
    <property type="expression patterns" value="baseline and differential"/>
</dbReference>
<dbReference type="GO" id="GO:0005743">
    <property type="term" value="C:mitochondrial inner membrane"/>
    <property type="evidence" value="ECO:0007669"/>
    <property type="project" value="UniProtKB-SubCell"/>
</dbReference>
<dbReference type="GO" id="GO:0005739">
    <property type="term" value="C:mitochondrion"/>
    <property type="evidence" value="ECO:0000314"/>
    <property type="project" value="ParkinsonsUK-UCL"/>
</dbReference>
<dbReference type="GO" id="GO:0043209">
    <property type="term" value="C:myelin sheath"/>
    <property type="evidence" value="ECO:0007005"/>
    <property type="project" value="UniProtKB"/>
</dbReference>
<dbReference type="GO" id="GO:0005524">
    <property type="term" value="F:ATP binding"/>
    <property type="evidence" value="ECO:0007669"/>
    <property type="project" value="UniProtKB-KW"/>
</dbReference>
<dbReference type="GO" id="GO:0004111">
    <property type="term" value="F:creatine kinase activity"/>
    <property type="evidence" value="ECO:0007669"/>
    <property type="project" value="UniProtKB-EC"/>
</dbReference>
<dbReference type="GO" id="GO:0043066">
    <property type="term" value="P:negative regulation of apoptotic process"/>
    <property type="evidence" value="ECO:0000316"/>
    <property type="project" value="ParkinsonsUK-UCL"/>
</dbReference>
<dbReference type="GO" id="GO:1901029">
    <property type="term" value="P:negative regulation of mitochondrial outer membrane permeabilization involved in apoptotic signaling pathway"/>
    <property type="evidence" value="ECO:0000314"/>
    <property type="project" value="ParkinsonsUK-UCL"/>
</dbReference>
<dbReference type="GO" id="GO:0046314">
    <property type="term" value="P:phosphocreatine biosynthetic process"/>
    <property type="evidence" value="ECO:0007669"/>
    <property type="project" value="InterPro"/>
</dbReference>
<dbReference type="CDD" id="cd00716">
    <property type="entry name" value="creatine_kinase_like"/>
    <property type="match status" value="1"/>
</dbReference>
<dbReference type="FunFam" id="3.30.590.10:FF:000002">
    <property type="entry name" value="Creatine kinase S-type, mitochondrial"/>
    <property type="match status" value="1"/>
</dbReference>
<dbReference type="FunFam" id="1.10.135.10:FF:000002">
    <property type="entry name" value="creatine kinase S-type, mitochondrial"/>
    <property type="match status" value="1"/>
</dbReference>
<dbReference type="Gene3D" id="1.10.135.10">
    <property type="entry name" value="ATP:guanido phosphotransferase, N-terminal domain"/>
    <property type="match status" value="1"/>
</dbReference>
<dbReference type="Gene3D" id="3.30.590.10">
    <property type="entry name" value="Glutamine synthetase/guanido kinase, catalytic domain"/>
    <property type="match status" value="1"/>
</dbReference>
<dbReference type="InterPro" id="IPR000749">
    <property type="entry name" value="ATP-guanido_PTrfase"/>
</dbReference>
<dbReference type="InterPro" id="IPR022415">
    <property type="entry name" value="ATP-guanido_PTrfase_AS"/>
</dbReference>
<dbReference type="InterPro" id="IPR022414">
    <property type="entry name" value="ATP-guanido_PTrfase_cat"/>
</dbReference>
<dbReference type="InterPro" id="IPR022413">
    <property type="entry name" value="ATP-guanido_PTrfase_N"/>
</dbReference>
<dbReference type="InterPro" id="IPR036802">
    <property type="entry name" value="ATP-guanido_PTrfase_N_sf"/>
</dbReference>
<dbReference type="InterPro" id="IPR014746">
    <property type="entry name" value="Gln_synth/guanido_kin_cat_dom"/>
</dbReference>
<dbReference type="PANTHER" id="PTHR11547">
    <property type="entry name" value="ARGININE OR CREATINE KINASE"/>
    <property type="match status" value="1"/>
</dbReference>
<dbReference type="PANTHER" id="PTHR11547:SF24">
    <property type="entry name" value="CREATINE KINASE U-TYPE, MITOCHONDRIAL"/>
    <property type="match status" value="1"/>
</dbReference>
<dbReference type="Pfam" id="PF00217">
    <property type="entry name" value="ATP-gua_Ptrans"/>
    <property type="match status" value="1"/>
</dbReference>
<dbReference type="Pfam" id="PF02807">
    <property type="entry name" value="ATP-gua_PtransN"/>
    <property type="match status" value="1"/>
</dbReference>
<dbReference type="SUPFAM" id="SSF55931">
    <property type="entry name" value="Glutamine synthetase/guanido kinase"/>
    <property type="match status" value="1"/>
</dbReference>
<dbReference type="SUPFAM" id="SSF48034">
    <property type="entry name" value="Guanido kinase N-terminal domain"/>
    <property type="match status" value="1"/>
</dbReference>
<dbReference type="PROSITE" id="PS00112">
    <property type="entry name" value="PHOSPHAGEN_KINASE"/>
    <property type="match status" value="1"/>
</dbReference>
<dbReference type="PROSITE" id="PS51510">
    <property type="entry name" value="PHOSPHAGEN_KINASE_C"/>
    <property type="match status" value="1"/>
</dbReference>
<dbReference type="PROSITE" id="PS51509">
    <property type="entry name" value="PHOSPHAGEN_KINASE_N"/>
    <property type="match status" value="1"/>
</dbReference>
<feature type="transit peptide" description="Mitochondrion" evidence="1">
    <location>
        <begin position="1"/>
        <end position="39"/>
    </location>
</feature>
<feature type="chain" id="PRO_0000016591" description="Creatine kinase U-type, mitochondrial">
    <location>
        <begin position="40"/>
        <end position="418"/>
    </location>
</feature>
<feature type="domain" description="Phosphagen kinase N-terminal" evidence="5">
    <location>
        <begin position="46"/>
        <end position="132"/>
    </location>
</feature>
<feature type="domain" description="Phosphagen kinase C-terminal" evidence="6">
    <location>
        <begin position="159"/>
        <end position="401"/>
    </location>
</feature>
<feature type="region of interest" description="Cardiolipin-binding" evidence="1">
    <location>
        <begin position="40"/>
        <end position="64"/>
    </location>
</feature>
<feature type="binding site" evidence="6">
    <location>
        <begin position="162"/>
        <end position="166"/>
    </location>
    <ligand>
        <name>ATP</name>
        <dbReference type="ChEBI" id="CHEBI:30616"/>
    </ligand>
</feature>
<feature type="binding site" evidence="6">
    <location>
        <position position="225"/>
    </location>
    <ligand>
        <name>ATP</name>
        <dbReference type="ChEBI" id="CHEBI:30616"/>
    </ligand>
</feature>
<feature type="binding site" evidence="6">
    <location>
        <position position="270"/>
    </location>
    <ligand>
        <name>ATP</name>
        <dbReference type="ChEBI" id="CHEBI:30616"/>
    </ligand>
</feature>
<feature type="binding site" evidence="6">
    <location>
        <position position="326"/>
    </location>
    <ligand>
        <name>ATP</name>
        <dbReference type="ChEBI" id="CHEBI:30616"/>
    </ligand>
</feature>
<feature type="binding site" evidence="6">
    <location>
        <begin position="354"/>
        <end position="359"/>
    </location>
    <ligand>
        <name>ATP</name>
        <dbReference type="ChEBI" id="CHEBI:30616"/>
    </ligand>
</feature>
<feature type="binding site" evidence="6">
    <location>
        <position position="369"/>
    </location>
    <ligand>
        <name>ATP</name>
        <dbReference type="ChEBI" id="CHEBI:30616"/>
    </ligand>
</feature>
<feature type="modified residue" description="Phosphoserine" evidence="4">
    <location>
        <position position="152"/>
    </location>
</feature>
<feature type="modified residue" description="Phosphoserine" evidence="4">
    <location>
        <position position="197"/>
    </location>
</feature>
<feature type="modified residue" description="Phosphothreonine" evidence="2">
    <location>
        <position position="214"/>
    </location>
</feature>
<feature type="modified residue" description="Phosphoserine" evidence="8">
    <location>
        <position position="233"/>
    </location>
</feature>
<feature type="modified residue" description="Phosphothreonine" evidence="3">
    <location>
        <position position="356"/>
    </location>
</feature>
<feature type="modified residue" description="Phosphoserine" evidence="8">
    <location>
        <position position="366"/>
    </location>
</feature>
<accession>P30275</accession>
<sequence length="418" mass="47004">MAGPFSRLLSARPGLRLLALAGAGSLTAGILLRPESVGAAAAERRRLYPPSAEYPDLRKHNNCMASHLTPAVYARLCDKTTPTGWTLDQCIQTGVDNPGHPFIKTVGMVAGDEETYEVFAELFDPVIQERHNGYDPRTMKHTTDLDASKIRSGYFDERYVLSSRVRTGRSIRGLSLPPACTRAERREVERVVVDALSGLKGDLAGRYYRLSEMTEAEQQQLIDDHFLFDKPVSPLLTAAGMARDWPDARGIWHNNEKSFLIWVNEEDHTRVISMEKGGNMKRVFERFCRGLKEVEKLIQERGWEFMWNERLGYILTCPSNLGTGLRAGVHIKLPLLSKDNRFPKILENLRLQKRGTGGVDTAATGSVFDISNLDRLGKSEVELVQLVIDGVNYLIDCERRLERGQDIRIPPPLVHSKH</sequence>
<proteinExistence type="evidence at protein level"/>
<evidence type="ECO:0000250" key="1"/>
<evidence type="ECO:0000250" key="2">
    <source>
        <dbReference type="UniProtKB" id="P00564"/>
    </source>
</evidence>
<evidence type="ECO:0000250" key="3">
    <source>
        <dbReference type="UniProtKB" id="P07310"/>
    </source>
</evidence>
<evidence type="ECO:0000250" key="4">
    <source>
        <dbReference type="UniProtKB" id="P25809"/>
    </source>
</evidence>
<evidence type="ECO:0000255" key="5">
    <source>
        <dbReference type="PROSITE-ProRule" id="PRU00842"/>
    </source>
</evidence>
<evidence type="ECO:0000255" key="6">
    <source>
        <dbReference type="PROSITE-ProRule" id="PRU00843"/>
    </source>
</evidence>
<evidence type="ECO:0000255" key="7">
    <source>
        <dbReference type="PROSITE-ProRule" id="PRU10029"/>
    </source>
</evidence>
<evidence type="ECO:0007744" key="8">
    <source>
    </source>
</evidence>
<reference key="1">
    <citation type="journal article" date="1995" name="DNA Cell Biol.">
        <title>Mouse ubiquitous mitochondrial creatine kinase: gene organization and consequences from inactivation in mouse embryonic stem cells.</title>
        <authorList>
            <person name="Steeghs K."/>
            <person name="Peters W."/>
            <person name="Brueckwilder M."/>
            <person name="Croes H."/>
            <person name="van Alewijk D."/>
            <person name="Wieringa B."/>
        </authorList>
    </citation>
    <scope>NUCLEOTIDE SEQUENCE [GENOMIC DNA / MRNA]</scope>
</reference>
<reference key="2">
    <citation type="journal article" date="2004" name="Genome Res.">
        <title>The status, quality, and expansion of the NIH full-length cDNA project: the Mammalian Gene Collection (MGC).</title>
        <authorList>
            <consortium name="The MGC Project Team"/>
        </authorList>
    </citation>
    <scope>NUCLEOTIDE SEQUENCE [LARGE SCALE MRNA]</scope>
    <source>
        <strain>FVB/N</strain>
        <tissue>Colon</tissue>
    </source>
</reference>
<reference key="3">
    <citation type="submission" date="2009-01" db="UniProtKB">
        <authorList>
            <person name="Lubec G."/>
            <person name="Kang S.U."/>
            <person name="Klug S."/>
            <person name="Sunyer B."/>
            <person name="Chen W.-Q."/>
        </authorList>
    </citation>
    <scope>PROTEIN SEQUENCE OF 47-75; 105-130; 152-158; 173-182; 191-200; 250-270; 302-326 AND 355-375</scope>
    <scope>IDENTIFICATION BY MASS SPECTROMETRY</scope>
    <source>
        <strain>C57BL/6J</strain>
        <strain>OF1</strain>
        <tissue>Brain</tissue>
        <tissue>Hippocampus</tissue>
    </source>
</reference>
<reference key="4">
    <citation type="journal article" date="2010" name="Cell">
        <title>A tissue-specific atlas of mouse protein phosphorylation and expression.</title>
        <authorList>
            <person name="Huttlin E.L."/>
            <person name="Jedrychowski M.P."/>
            <person name="Elias J.E."/>
            <person name="Goswami T."/>
            <person name="Rad R."/>
            <person name="Beausoleil S.A."/>
            <person name="Villen J."/>
            <person name="Haas W."/>
            <person name="Sowa M.E."/>
            <person name="Gygi S.P."/>
        </authorList>
    </citation>
    <scope>PHOSPHORYLATION [LARGE SCALE ANALYSIS] AT SER-233 AND SER-366</scope>
    <scope>IDENTIFICATION BY MASS SPECTROMETRY [LARGE SCALE ANALYSIS]</scope>
    <source>
        <tissue>Brain</tissue>
        <tissue>Kidney</tissue>
        <tissue>Lung</tissue>
        <tissue>Pancreas</tissue>
    </source>
</reference>
<gene>
    <name type="primary">Ckmt1</name>
</gene>
<comment type="function">
    <text>Reversibly catalyzes the transfer of phosphate between ATP and various phosphogens (e.g. creatine phosphate). Creatine kinase isoenzymes play a central role in energy transduction in tissues with large, fluctuating energy demands, such as skeletal muscle, heart, brain and spermatozoa.</text>
</comment>
<comment type="catalytic activity">
    <reaction evidence="7">
        <text>creatine + ATP = N-phosphocreatine + ADP + H(+)</text>
        <dbReference type="Rhea" id="RHEA:17157"/>
        <dbReference type="ChEBI" id="CHEBI:15378"/>
        <dbReference type="ChEBI" id="CHEBI:30616"/>
        <dbReference type="ChEBI" id="CHEBI:57947"/>
        <dbReference type="ChEBI" id="CHEBI:58092"/>
        <dbReference type="ChEBI" id="CHEBI:456216"/>
        <dbReference type="EC" id="2.7.3.2"/>
    </reaction>
</comment>
<comment type="subunit">
    <text>Exists as an octamer composed of four MTCK homodimers.</text>
</comment>
<comment type="interaction">
    <interactant intactId="EBI-773103">
        <id>P30275</id>
    </interactant>
    <interactant intactId="EBI-15576110">
        <id>P41969</id>
        <label>Elk1</label>
    </interactant>
    <organismsDiffer>false</organismsDiffer>
    <experiments>2</experiments>
</comment>
<comment type="interaction">
    <interactant intactId="EBI-773103">
        <id>P30275</id>
    </interactant>
    <interactant intactId="EBI-5323863">
        <id>Q5S007</id>
        <label>LRRK2</label>
    </interactant>
    <organismsDiffer>true</organismsDiffer>
    <experiments>2</experiments>
</comment>
<comment type="subcellular location">
    <subcellularLocation>
        <location>Mitochondrion inner membrane</location>
        <topology>Peripheral membrane protein</topology>
        <orientation>Intermembrane side</orientation>
    </subcellularLocation>
</comment>
<comment type="miscellaneous">
    <text>Mitochondrial creatine kinase binds cardiolipin.</text>
</comment>
<comment type="similarity">
    <text evidence="5 6">Belongs to the ATP:guanido phosphotransferase family.</text>
</comment>
<keyword id="KW-0067">ATP-binding</keyword>
<keyword id="KW-0903">Direct protein sequencing</keyword>
<keyword id="KW-0418">Kinase</keyword>
<keyword id="KW-0472">Membrane</keyword>
<keyword id="KW-0496">Mitochondrion</keyword>
<keyword id="KW-0999">Mitochondrion inner membrane</keyword>
<keyword id="KW-0547">Nucleotide-binding</keyword>
<keyword id="KW-0597">Phosphoprotein</keyword>
<keyword id="KW-1185">Reference proteome</keyword>
<keyword id="KW-0808">Transferase</keyword>
<keyword id="KW-0809">Transit peptide</keyword>
<name>KCRU_MOUSE</name>